<accession>B6IWU1</accession>
<protein>
    <recommendedName>
        <fullName evidence="1">3-deoxy-manno-octulosonate cytidylyltransferase</fullName>
        <ecNumber evidence="1">2.7.7.38</ecNumber>
    </recommendedName>
    <alternativeName>
        <fullName evidence="1">CMP-2-keto-3-deoxyoctulosonic acid synthase</fullName>
        <shortName evidence="1">CKS</shortName>
        <shortName evidence="1">CMP-KDO synthase</shortName>
    </alternativeName>
</protein>
<feature type="chain" id="PRO_0000370141" description="3-deoxy-manno-octulosonate cytidylyltransferase">
    <location>
        <begin position="1"/>
        <end position="257"/>
    </location>
</feature>
<comment type="function">
    <text evidence="1">Activates KDO (a required 8-carbon sugar) for incorporation into bacterial lipopolysaccharide in Gram-negative bacteria.</text>
</comment>
<comment type="catalytic activity">
    <reaction evidence="1">
        <text>3-deoxy-alpha-D-manno-oct-2-ulosonate + CTP = CMP-3-deoxy-beta-D-manno-octulosonate + diphosphate</text>
        <dbReference type="Rhea" id="RHEA:23448"/>
        <dbReference type="ChEBI" id="CHEBI:33019"/>
        <dbReference type="ChEBI" id="CHEBI:37563"/>
        <dbReference type="ChEBI" id="CHEBI:85986"/>
        <dbReference type="ChEBI" id="CHEBI:85987"/>
        <dbReference type="EC" id="2.7.7.38"/>
    </reaction>
</comment>
<comment type="pathway">
    <text evidence="1">Nucleotide-sugar biosynthesis; CMP-3-deoxy-D-manno-octulosonate biosynthesis; CMP-3-deoxy-D-manno-octulosonate from 3-deoxy-D-manno-octulosonate and CTP: step 1/1.</text>
</comment>
<comment type="pathway">
    <text evidence="1">Bacterial outer membrane biogenesis; lipopolysaccharide biosynthesis.</text>
</comment>
<comment type="subcellular location">
    <subcellularLocation>
        <location evidence="1">Cytoplasm</location>
    </subcellularLocation>
</comment>
<comment type="similarity">
    <text evidence="1">Belongs to the KdsB family.</text>
</comment>
<organism>
    <name type="scientific">Rhodospirillum centenum (strain ATCC 51521 / SW)</name>
    <dbReference type="NCBI Taxonomy" id="414684"/>
    <lineage>
        <taxon>Bacteria</taxon>
        <taxon>Pseudomonadati</taxon>
        <taxon>Pseudomonadota</taxon>
        <taxon>Alphaproteobacteria</taxon>
        <taxon>Rhodospirillales</taxon>
        <taxon>Rhodospirillaceae</taxon>
        <taxon>Rhodospirillum</taxon>
    </lineage>
</organism>
<reference key="1">
    <citation type="submission" date="2007-03" db="EMBL/GenBank/DDBJ databases">
        <title>Genome sequence of Rhodospirillum centenum.</title>
        <authorList>
            <person name="Touchman J.W."/>
            <person name="Bauer C."/>
            <person name="Blankenship R.E."/>
        </authorList>
    </citation>
    <scope>NUCLEOTIDE SEQUENCE [LARGE SCALE GENOMIC DNA]</scope>
    <source>
        <strain>ATCC 51521 / SW</strain>
    </source>
</reference>
<name>KDSB_RHOCS</name>
<sequence length="257" mass="27065">MTAAPRNPLIVIPARLAASRLPDKPLADIHGRPMIAHVLDRAREADIGPVVVACADAAIADAVAAAGGRAVLTDPAHPSGSDRVWEAVCRVDPDGRHDAVVNVQGDLPTIDPAAVRAVFGPLARPGTDIATLAAEIVRVEERTDPNVVKAVVELAPGARDGRALYFTRATAPWGEGPLFHHIGLYAYRREALARFVALPPAALERREKLEQLRALAAGMTIAVAIVDTVPLGVDTAADLERARALLDPRTGARPALP</sequence>
<proteinExistence type="inferred from homology"/>
<gene>
    <name evidence="1" type="primary">kdsB</name>
    <name type="ordered locus">RC1_3405</name>
</gene>
<evidence type="ECO:0000255" key="1">
    <source>
        <dbReference type="HAMAP-Rule" id="MF_00057"/>
    </source>
</evidence>
<dbReference type="EC" id="2.7.7.38" evidence="1"/>
<dbReference type="EMBL" id="CP000613">
    <property type="protein sequence ID" value="ACJ00765.1"/>
    <property type="molecule type" value="Genomic_DNA"/>
</dbReference>
<dbReference type="RefSeq" id="WP_012568543.1">
    <property type="nucleotide sequence ID" value="NC_011420.2"/>
</dbReference>
<dbReference type="SMR" id="B6IWU1"/>
<dbReference type="STRING" id="414684.RC1_3405"/>
<dbReference type="KEGG" id="rce:RC1_3405"/>
<dbReference type="eggNOG" id="COG1212">
    <property type="taxonomic scope" value="Bacteria"/>
</dbReference>
<dbReference type="HOGENOM" id="CLU_065038_0_1_5"/>
<dbReference type="OrthoDB" id="9815559at2"/>
<dbReference type="UniPathway" id="UPA00030"/>
<dbReference type="UniPathway" id="UPA00358">
    <property type="reaction ID" value="UER00476"/>
</dbReference>
<dbReference type="Proteomes" id="UP000001591">
    <property type="component" value="Chromosome"/>
</dbReference>
<dbReference type="GO" id="GO:0005829">
    <property type="term" value="C:cytosol"/>
    <property type="evidence" value="ECO:0007669"/>
    <property type="project" value="TreeGrafter"/>
</dbReference>
<dbReference type="GO" id="GO:0008690">
    <property type="term" value="F:3-deoxy-manno-octulosonate cytidylyltransferase activity"/>
    <property type="evidence" value="ECO:0007669"/>
    <property type="project" value="UniProtKB-UniRule"/>
</dbReference>
<dbReference type="GO" id="GO:0033468">
    <property type="term" value="P:CMP-keto-3-deoxy-D-manno-octulosonic acid biosynthetic process"/>
    <property type="evidence" value="ECO:0007669"/>
    <property type="project" value="UniProtKB-UniRule"/>
</dbReference>
<dbReference type="GO" id="GO:0009103">
    <property type="term" value="P:lipopolysaccharide biosynthetic process"/>
    <property type="evidence" value="ECO:0007669"/>
    <property type="project" value="UniProtKB-UniRule"/>
</dbReference>
<dbReference type="CDD" id="cd02517">
    <property type="entry name" value="CMP-KDO-Synthetase"/>
    <property type="match status" value="1"/>
</dbReference>
<dbReference type="Gene3D" id="3.90.550.10">
    <property type="entry name" value="Spore Coat Polysaccharide Biosynthesis Protein SpsA, Chain A"/>
    <property type="match status" value="1"/>
</dbReference>
<dbReference type="HAMAP" id="MF_00057">
    <property type="entry name" value="KdsB"/>
    <property type="match status" value="1"/>
</dbReference>
<dbReference type="InterPro" id="IPR003329">
    <property type="entry name" value="Cytidylyl_trans"/>
</dbReference>
<dbReference type="InterPro" id="IPR004528">
    <property type="entry name" value="KdsB"/>
</dbReference>
<dbReference type="InterPro" id="IPR029044">
    <property type="entry name" value="Nucleotide-diphossugar_trans"/>
</dbReference>
<dbReference type="NCBIfam" id="TIGR00466">
    <property type="entry name" value="kdsB"/>
    <property type="match status" value="1"/>
</dbReference>
<dbReference type="NCBIfam" id="NF003948">
    <property type="entry name" value="PRK05450.1-1"/>
    <property type="match status" value="1"/>
</dbReference>
<dbReference type="NCBIfam" id="NF003952">
    <property type="entry name" value="PRK05450.1-5"/>
    <property type="match status" value="1"/>
</dbReference>
<dbReference type="PANTHER" id="PTHR42866">
    <property type="entry name" value="3-DEOXY-MANNO-OCTULOSONATE CYTIDYLYLTRANSFERASE"/>
    <property type="match status" value="1"/>
</dbReference>
<dbReference type="PANTHER" id="PTHR42866:SF2">
    <property type="entry name" value="3-DEOXY-MANNO-OCTULOSONATE CYTIDYLYLTRANSFERASE, MITOCHONDRIAL"/>
    <property type="match status" value="1"/>
</dbReference>
<dbReference type="Pfam" id="PF02348">
    <property type="entry name" value="CTP_transf_3"/>
    <property type="match status" value="1"/>
</dbReference>
<dbReference type="SUPFAM" id="SSF53448">
    <property type="entry name" value="Nucleotide-diphospho-sugar transferases"/>
    <property type="match status" value="1"/>
</dbReference>
<keyword id="KW-0963">Cytoplasm</keyword>
<keyword id="KW-0448">Lipopolysaccharide biosynthesis</keyword>
<keyword id="KW-0548">Nucleotidyltransferase</keyword>
<keyword id="KW-1185">Reference proteome</keyword>
<keyword id="KW-0808">Transferase</keyword>